<comment type="function">
    <text evidence="1">Essential for recycling GMP and indirectly, cGMP.</text>
</comment>
<comment type="catalytic activity">
    <reaction evidence="1">
        <text>GMP + ATP = GDP + ADP</text>
        <dbReference type="Rhea" id="RHEA:20780"/>
        <dbReference type="ChEBI" id="CHEBI:30616"/>
        <dbReference type="ChEBI" id="CHEBI:58115"/>
        <dbReference type="ChEBI" id="CHEBI:58189"/>
        <dbReference type="ChEBI" id="CHEBI:456216"/>
        <dbReference type="EC" id="2.7.4.8"/>
    </reaction>
</comment>
<comment type="subcellular location">
    <subcellularLocation>
        <location evidence="1">Cytoplasm</location>
    </subcellularLocation>
</comment>
<comment type="similarity">
    <text evidence="1">Belongs to the guanylate kinase family.</text>
</comment>
<name>KGUA_HAHCH</name>
<proteinExistence type="inferred from homology"/>
<dbReference type="EC" id="2.7.4.8" evidence="1"/>
<dbReference type="EMBL" id="CP000155">
    <property type="protein sequence ID" value="ABC32962.1"/>
    <property type="molecule type" value="Genomic_DNA"/>
</dbReference>
<dbReference type="RefSeq" id="WP_011400018.1">
    <property type="nucleotide sequence ID" value="NC_007645.1"/>
</dbReference>
<dbReference type="SMR" id="Q2S8R2"/>
<dbReference type="STRING" id="349521.HCH_06315"/>
<dbReference type="KEGG" id="hch:HCH_06315"/>
<dbReference type="eggNOG" id="COG0194">
    <property type="taxonomic scope" value="Bacteria"/>
</dbReference>
<dbReference type="HOGENOM" id="CLU_001715_1_0_6"/>
<dbReference type="OrthoDB" id="9808150at2"/>
<dbReference type="Proteomes" id="UP000000238">
    <property type="component" value="Chromosome"/>
</dbReference>
<dbReference type="GO" id="GO:0005829">
    <property type="term" value="C:cytosol"/>
    <property type="evidence" value="ECO:0007669"/>
    <property type="project" value="TreeGrafter"/>
</dbReference>
<dbReference type="GO" id="GO:0005524">
    <property type="term" value="F:ATP binding"/>
    <property type="evidence" value="ECO:0007669"/>
    <property type="project" value="UniProtKB-UniRule"/>
</dbReference>
<dbReference type="GO" id="GO:0004385">
    <property type="term" value="F:guanylate kinase activity"/>
    <property type="evidence" value="ECO:0007669"/>
    <property type="project" value="UniProtKB-UniRule"/>
</dbReference>
<dbReference type="CDD" id="cd00071">
    <property type="entry name" value="GMPK"/>
    <property type="match status" value="1"/>
</dbReference>
<dbReference type="FunFam" id="3.40.50.300:FF:000855">
    <property type="entry name" value="Guanylate kinase"/>
    <property type="match status" value="1"/>
</dbReference>
<dbReference type="FunFam" id="3.30.63.10:FF:000002">
    <property type="entry name" value="Guanylate kinase 1"/>
    <property type="match status" value="1"/>
</dbReference>
<dbReference type="Gene3D" id="3.30.63.10">
    <property type="entry name" value="Guanylate Kinase phosphate binding domain"/>
    <property type="match status" value="1"/>
</dbReference>
<dbReference type="Gene3D" id="3.40.50.300">
    <property type="entry name" value="P-loop containing nucleotide triphosphate hydrolases"/>
    <property type="match status" value="1"/>
</dbReference>
<dbReference type="HAMAP" id="MF_00328">
    <property type="entry name" value="Guanylate_kinase"/>
    <property type="match status" value="1"/>
</dbReference>
<dbReference type="InterPro" id="IPR008145">
    <property type="entry name" value="GK/Ca_channel_bsu"/>
</dbReference>
<dbReference type="InterPro" id="IPR008144">
    <property type="entry name" value="Guanylate_kin-like_dom"/>
</dbReference>
<dbReference type="InterPro" id="IPR017665">
    <property type="entry name" value="Guanylate_kinase"/>
</dbReference>
<dbReference type="InterPro" id="IPR020590">
    <property type="entry name" value="Guanylate_kinase_CS"/>
</dbReference>
<dbReference type="InterPro" id="IPR027417">
    <property type="entry name" value="P-loop_NTPase"/>
</dbReference>
<dbReference type="NCBIfam" id="TIGR03263">
    <property type="entry name" value="guanyl_kin"/>
    <property type="match status" value="1"/>
</dbReference>
<dbReference type="PANTHER" id="PTHR23117:SF13">
    <property type="entry name" value="GUANYLATE KINASE"/>
    <property type="match status" value="1"/>
</dbReference>
<dbReference type="PANTHER" id="PTHR23117">
    <property type="entry name" value="GUANYLATE KINASE-RELATED"/>
    <property type="match status" value="1"/>
</dbReference>
<dbReference type="Pfam" id="PF00625">
    <property type="entry name" value="Guanylate_kin"/>
    <property type="match status" value="1"/>
</dbReference>
<dbReference type="SMART" id="SM00072">
    <property type="entry name" value="GuKc"/>
    <property type="match status" value="1"/>
</dbReference>
<dbReference type="SUPFAM" id="SSF52540">
    <property type="entry name" value="P-loop containing nucleoside triphosphate hydrolases"/>
    <property type="match status" value="1"/>
</dbReference>
<dbReference type="PROSITE" id="PS00856">
    <property type="entry name" value="GUANYLATE_KINASE_1"/>
    <property type="match status" value="1"/>
</dbReference>
<dbReference type="PROSITE" id="PS50052">
    <property type="entry name" value="GUANYLATE_KINASE_2"/>
    <property type="match status" value="1"/>
</dbReference>
<reference key="1">
    <citation type="journal article" date="2005" name="Nucleic Acids Res.">
        <title>Genomic blueprint of Hahella chejuensis, a marine microbe producing an algicidal agent.</title>
        <authorList>
            <person name="Jeong H."/>
            <person name="Yim J.H."/>
            <person name="Lee C."/>
            <person name="Choi S.-H."/>
            <person name="Park Y.K."/>
            <person name="Yoon S.H."/>
            <person name="Hur C.-G."/>
            <person name="Kang H.-Y."/>
            <person name="Kim D."/>
            <person name="Lee H.H."/>
            <person name="Park K.H."/>
            <person name="Park S.-H."/>
            <person name="Park H.-S."/>
            <person name="Lee H.K."/>
            <person name="Oh T.K."/>
            <person name="Kim J.F."/>
        </authorList>
    </citation>
    <scope>NUCLEOTIDE SEQUENCE [LARGE SCALE GENOMIC DNA]</scope>
    <source>
        <strain>KCTC 2396</strain>
    </source>
</reference>
<sequence length="208" mass="23480">MARGQLYIISAPSGAGKTSLVSALLKEDKLAQVSISHTTRQVRPGEQDGVNYFFISREEFLAQAQAGDFLEHAEVFGNFYGTSQAWVESTLAKGVDVILEIDWQGAQQVRKLRPEAKSIFILPPSLEALQQRLESRGQDSAEVIQRRLQEAANEISHYPEYDYLVFNDDFDHALEELKSVFRAERLRLSVQQVRFEAELRGMLSSQSS</sequence>
<organism>
    <name type="scientific">Hahella chejuensis (strain KCTC 2396)</name>
    <dbReference type="NCBI Taxonomy" id="349521"/>
    <lineage>
        <taxon>Bacteria</taxon>
        <taxon>Pseudomonadati</taxon>
        <taxon>Pseudomonadota</taxon>
        <taxon>Gammaproteobacteria</taxon>
        <taxon>Oceanospirillales</taxon>
        <taxon>Hahellaceae</taxon>
        <taxon>Hahella</taxon>
    </lineage>
</organism>
<accession>Q2S8R2</accession>
<protein>
    <recommendedName>
        <fullName evidence="1">Guanylate kinase</fullName>
        <ecNumber evidence="1">2.7.4.8</ecNumber>
    </recommendedName>
    <alternativeName>
        <fullName evidence="1">GMP kinase</fullName>
    </alternativeName>
</protein>
<keyword id="KW-0067">ATP-binding</keyword>
<keyword id="KW-0963">Cytoplasm</keyword>
<keyword id="KW-0418">Kinase</keyword>
<keyword id="KW-0547">Nucleotide-binding</keyword>
<keyword id="KW-1185">Reference proteome</keyword>
<keyword id="KW-0808">Transferase</keyword>
<evidence type="ECO:0000255" key="1">
    <source>
        <dbReference type="HAMAP-Rule" id="MF_00328"/>
    </source>
</evidence>
<gene>
    <name evidence="1" type="primary">gmk</name>
    <name type="ordered locus">HCH_06315</name>
</gene>
<feature type="chain" id="PRO_0000266334" description="Guanylate kinase">
    <location>
        <begin position="1"/>
        <end position="208"/>
    </location>
</feature>
<feature type="domain" description="Guanylate kinase-like" evidence="1">
    <location>
        <begin position="4"/>
        <end position="182"/>
    </location>
</feature>
<feature type="binding site" evidence="1">
    <location>
        <begin position="11"/>
        <end position="18"/>
    </location>
    <ligand>
        <name>ATP</name>
        <dbReference type="ChEBI" id="CHEBI:30616"/>
    </ligand>
</feature>